<keyword id="KW-0963">Cytoplasm</keyword>
<keyword id="KW-0290">Folate-binding</keyword>
<keyword id="KW-1185">Reference proteome</keyword>
<keyword id="KW-0819">tRNA processing</keyword>
<proteinExistence type="inferred from homology"/>
<reference key="1">
    <citation type="journal article" date="2004" name="Proc. Natl. Acad. Sci. U.S.A.">
        <title>Genome sequence of the enterobacterial phytopathogen Erwinia carotovora subsp. atroseptica and characterization of virulence factors.</title>
        <authorList>
            <person name="Bell K.S."/>
            <person name="Sebaihia M."/>
            <person name="Pritchard L."/>
            <person name="Holden M.T.G."/>
            <person name="Hyman L.J."/>
            <person name="Holeva M.C."/>
            <person name="Thomson N.R."/>
            <person name="Bentley S.D."/>
            <person name="Churcher L.J.C."/>
            <person name="Mungall K."/>
            <person name="Atkin R."/>
            <person name="Bason N."/>
            <person name="Brooks K."/>
            <person name="Chillingworth T."/>
            <person name="Clark K."/>
            <person name="Doggett J."/>
            <person name="Fraser A."/>
            <person name="Hance Z."/>
            <person name="Hauser H."/>
            <person name="Jagels K."/>
            <person name="Moule S."/>
            <person name="Norbertczak H."/>
            <person name="Ormond D."/>
            <person name="Price C."/>
            <person name="Quail M.A."/>
            <person name="Sanders M."/>
            <person name="Walker D."/>
            <person name="Whitehead S."/>
            <person name="Salmond G.P.C."/>
            <person name="Birch P.R.J."/>
            <person name="Parkhill J."/>
            <person name="Toth I.K."/>
        </authorList>
    </citation>
    <scope>NUCLEOTIDE SEQUENCE [LARGE SCALE GENOMIC DNA]</scope>
    <source>
        <strain>SCRI 1043 / ATCC BAA-672</strain>
    </source>
</reference>
<feature type="chain" id="PRO_0000262888" description="tRNA-modifying protein YgfZ">
    <location>
        <begin position="1"/>
        <end position="333"/>
    </location>
</feature>
<feature type="binding site" evidence="1">
    <location>
        <position position="33"/>
    </location>
    <ligand>
        <name>folate</name>
        <dbReference type="ChEBI" id="CHEBI:62501"/>
    </ligand>
</feature>
<feature type="binding site" evidence="1">
    <location>
        <position position="195"/>
    </location>
    <ligand>
        <name>folate</name>
        <dbReference type="ChEBI" id="CHEBI:62501"/>
    </ligand>
</feature>
<organism>
    <name type="scientific">Pectobacterium atrosepticum (strain SCRI 1043 / ATCC BAA-672)</name>
    <name type="common">Erwinia carotovora subsp. atroseptica</name>
    <dbReference type="NCBI Taxonomy" id="218491"/>
    <lineage>
        <taxon>Bacteria</taxon>
        <taxon>Pseudomonadati</taxon>
        <taxon>Pseudomonadota</taxon>
        <taxon>Gammaproteobacteria</taxon>
        <taxon>Enterobacterales</taxon>
        <taxon>Pectobacteriaceae</taxon>
        <taxon>Pectobacterium</taxon>
    </lineage>
</organism>
<accession>Q6D961</accession>
<protein>
    <recommendedName>
        <fullName evidence="1">tRNA-modifying protein YgfZ</fullName>
    </recommendedName>
</protein>
<sequence>MVNQHTAHQLPFASQLPFASTQLAATLISLDDWALATLVGPDTVKYLQGQVTADVGALPDNGHILCAHCDAKGKMWSNLRLFHHGEGFAFIERRNLRDVQLSELKKYAVFSKTAIAPDDNTILLGAAGAGIRELLASVFSQLPDAEHPVVQHEGATLLHFAHPAERFLLVLSPEPSASLLEQLGDKVSLNDSRQWLTLDIEAGQPIIDSANSAQFIPQATNLQALNGISFSKGCYTGQEMVARAKYRGANKRALYWLAGKANKVPQAGDDLELQLGENWRRTGTVLAASQLQNGDVWVQAVLNNDLNAENTLRVRDDADSQLTVQPLPYEITD</sequence>
<dbReference type="EMBL" id="BX950851">
    <property type="protein sequence ID" value="CAG73672.1"/>
    <property type="molecule type" value="Genomic_DNA"/>
</dbReference>
<dbReference type="SMR" id="Q6D961"/>
<dbReference type="STRING" id="218491.ECA0758"/>
<dbReference type="KEGG" id="eca:ECA0758"/>
<dbReference type="PATRIC" id="fig|218491.5.peg.756"/>
<dbReference type="eggNOG" id="COG0354">
    <property type="taxonomic scope" value="Bacteria"/>
</dbReference>
<dbReference type="HOGENOM" id="CLU_007884_6_1_6"/>
<dbReference type="OrthoDB" id="9796287at2"/>
<dbReference type="Proteomes" id="UP000007966">
    <property type="component" value="Chromosome"/>
</dbReference>
<dbReference type="GO" id="GO:0005737">
    <property type="term" value="C:cytoplasm"/>
    <property type="evidence" value="ECO:0007669"/>
    <property type="project" value="UniProtKB-SubCell"/>
</dbReference>
<dbReference type="GO" id="GO:0005542">
    <property type="term" value="F:folic acid binding"/>
    <property type="evidence" value="ECO:0007669"/>
    <property type="project" value="UniProtKB-UniRule"/>
</dbReference>
<dbReference type="GO" id="GO:0016226">
    <property type="term" value="P:iron-sulfur cluster assembly"/>
    <property type="evidence" value="ECO:0007669"/>
    <property type="project" value="TreeGrafter"/>
</dbReference>
<dbReference type="GO" id="GO:0009451">
    <property type="term" value="P:RNA modification"/>
    <property type="evidence" value="ECO:0007669"/>
    <property type="project" value="InterPro"/>
</dbReference>
<dbReference type="GO" id="GO:0008033">
    <property type="term" value="P:tRNA processing"/>
    <property type="evidence" value="ECO:0007669"/>
    <property type="project" value="UniProtKB-UniRule"/>
</dbReference>
<dbReference type="FunFam" id="2.40.30.160:FF:000001">
    <property type="entry name" value="tRNA-modifying protein YgfZ"/>
    <property type="match status" value="1"/>
</dbReference>
<dbReference type="FunFam" id="3.30.70.1400:FF:000002">
    <property type="entry name" value="tRNA-modifying protein YgfZ"/>
    <property type="match status" value="1"/>
</dbReference>
<dbReference type="Gene3D" id="2.40.30.160">
    <property type="match status" value="1"/>
</dbReference>
<dbReference type="Gene3D" id="3.30.70.1630">
    <property type="match status" value="1"/>
</dbReference>
<dbReference type="Gene3D" id="3.30.70.1400">
    <property type="entry name" value="Aminomethyltransferase beta-barrel domains"/>
    <property type="match status" value="1"/>
</dbReference>
<dbReference type="HAMAP" id="MF_01175">
    <property type="entry name" value="tRNA_modifying_YgfZ"/>
    <property type="match status" value="1"/>
</dbReference>
<dbReference type="InterPro" id="IPR029043">
    <property type="entry name" value="GcvT/YgfZ_C"/>
</dbReference>
<dbReference type="InterPro" id="IPR023758">
    <property type="entry name" value="tRNA-modifying_YgfZ"/>
</dbReference>
<dbReference type="InterPro" id="IPR045179">
    <property type="entry name" value="YgfZ/GcvT"/>
</dbReference>
<dbReference type="InterPro" id="IPR017703">
    <property type="entry name" value="YgfZ/GcvT_CS"/>
</dbReference>
<dbReference type="InterPro" id="IPR048451">
    <property type="entry name" value="YgfZ_barrel"/>
</dbReference>
<dbReference type="NCBIfam" id="NF007110">
    <property type="entry name" value="PRK09559.1"/>
    <property type="match status" value="1"/>
</dbReference>
<dbReference type="NCBIfam" id="TIGR03317">
    <property type="entry name" value="ygfZ_signature"/>
    <property type="match status" value="1"/>
</dbReference>
<dbReference type="PANTHER" id="PTHR22602">
    <property type="entry name" value="TRANSFERASE CAF17, MITOCHONDRIAL-RELATED"/>
    <property type="match status" value="1"/>
</dbReference>
<dbReference type="PANTHER" id="PTHR22602:SF0">
    <property type="entry name" value="TRANSFERASE CAF17, MITOCHONDRIAL-RELATED"/>
    <property type="match status" value="1"/>
</dbReference>
<dbReference type="Pfam" id="PF21130">
    <property type="entry name" value="YgfZ_barrel"/>
    <property type="match status" value="1"/>
</dbReference>
<dbReference type="SUPFAM" id="SSF101790">
    <property type="entry name" value="Aminomethyltransferase beta-barrel domain"/>
    <property type="match status" value="1"/>
</dbReference>
<dbReference type="SUPFAM" id="SSF103025">
    <property type="entry name" value="Folate-binding domain"/>
    <property type="match status" value="1"/>
</dbReference>
<name>YGFZ_PECAS</name>
<evidence type="ECO:0000255" key="1">
    <source>
        <dbReference type="HAMAP-Rule" id="MF_01175"/>
    </source>
</evidence>
<gene>
    <name type="ordered locus">ECA0758</name>
</gene>
<comment type="function">
    <text evidence="1">Folate-binding protein involved in regulating the level of ATP-DnaA and in the modification of some tRNAs. It is probably a key factor in regulatory networks that act via tRNA modification, such as initiation of chromosomal replication.</text>
</comment>
<comment type="subcellular location">
    <subcellularLocation>
        <location evidence="1">Cytoplasm</location>
    </subcellularLocation>
</comment>
<comment type="similarity">
    <text evidence="1">Belongs to the tRNA-modifying YgfZ family.</text>
</comment>